<proteinExistence type="inferred from homology"/>
<reference key="1">
    <citation type="submission" date="2007-10" db="EMBL/GenBank/DDBJ databases">
        <title>Complete sequence of Caldivirga maquilingensis IC-167.</title>
        <authorList>
            <consortium name="US DOE Joint Genome Institute"/>
            <person name="Copeland A."/>
            <person name="Lucas S."/>
            <person name="Lapidus A."/>
            <person name="Barry K."/>
            <person name="Glavina del Rio T."/>
            <person name="Dalin E."/>
            <person name="Tice H."/>
            <person name="Pitluck S."/>
            <person name="Saunders E."/>
            <person name="Brettin T."/>
            <person name="Bruce D."/>
            <person name="Detter J.C."/>
            <person name="Han C."/>
            <person name="Schmutz J."/>
            <person name="Larimer F."/>
            <person name="Land M."/>
            <person name="Hauser L."/>
            <person name="Kyrpides N."/>
            <person name="Ivanova N."/>
            <person name="Biddle J.F."/>
            <person name="Zhang Z."/>
            <person name="Fitz-Gibbon S.T."/>
            <person name="Lowe T.M."/>
            <person name="Saltikov C."/>
            <person name="House C.H."/>
            <person name="Richardson P."/>
        </authorList>
    </citation>
    <scope>NUCLEOTIDE SEQUENCE [LARGE SCALE GENOMIC DNA]</scope>
    <source>
        <strain>ATCC 700844 / DSM 13496 / JCM 10307 / IC-167</strain>
    </source>
</reference>
<evidence type="ECO:0000255" key="1">
    <source>
        <dbReference type="HAMAP-Rule" id="MF_02113"/>
    </source>
</evidence>
<organism>
    <name type="scientific">Caldivirga maquilingensis (strain ATCC 700844 / DSM 13496 / JCM 10307 / IC-167)</name>
    <dbReference type="NCBI Taxonomy" id="397948"/>
    <lineage>
        <taxon>Archaea</taxon>
        <taxon>Thermoproteota</taxon>
        <taxon>Thermoprotei</taxon>
        <taxon>Thermoproteales</taxon>
        <taxon>Thermoproteaceae</taxon>
        <taxon>Caldivirga</taxon>
    </lineage>
</organism>
<name>PSB2_CALMQ</name>
<keyword id="KW-0068">Autocatalytic cleavage</keyword>
<keyword id="KW-0963">Cytoplasm</keyword>
<keyword id="KW-0378">Hydrolase</keyword>
<keyword id="KW-0645">Protease</keyword>
<keyword id="KW-0647">Proteasome</keyword>
<keyword id="KW-1185">Reference proteome</keyword>
<keyword id="KW-0888">Threonine protease</keyword>
<keyword id="KW-0865">Zymogen</keyword>
<gene>
    <name evidence="1" type="primary">psmB2</name>
    <name type="ordered locus">Cmaq_1307</name>
</gene>
<comment type="function">
    <text evidence="1">Component of the proteasome core, a large protease complex with broad specificity involved in protein degradation.</text>
</comment>
<comment type="catalytic activity">
    <reaction evidence="1">
        <text>Cleavage of peptide bonds with very broad specificity.</text>
        <dbReference type="EC" id="3.4.25.1"/>
    </reaction>
</comment>
<comment type="activity regulation">
    <text evidence="1">The formation of the proteasomal ATPase PAN-20S proteasome complex, via the docking of the C-termini of PAN into the intersubunit pockets in the alpha-rings, triggers opening of the gate for substrate entry. Interconversion between the open-gate and close-gate conformations leads to a dynamic regulation of the 20S proteasome proteolysis activity.</text>
</comment>
<comment type="subunit">
    <text evidence="1">The 20S proteasome core is composed of 14 alpha and 14 beta subunits that assemble into four stacked heptameric rings, resulting in a barrel-shaped structure. The two inner rings, each composed of seven catalytic beta subunits, are sandwiched by two outer rings, each composed of seven alpha subunits. The catalytic chamber with the active sites is on the inside of the barrel. Has a gated structure, the ends of the cylinder being occluded by the N-termini of the alpha-subunits. Is capped at one or both ends by the proteasome regulatory ATPase, PAN.</text>
</comment>
<comment type="subcellular location">
    <subcellularLocation>
        <location evidence="1">Cytoplasm</location>
    </subcellularLocation>
</comment>
<comment type="similarity">
    <text evidence="1">Belongs to the peptidase T1B family.</text>
</comment>
<feature type="propeptide" id="PRO_0000397280" description="Removed in mature form; by autocatalysis" evidence="1">
    <location>
        <begin position="1"/>
        <end position="10"/>
    </location>
</feature>
<feature type="chain" id="PRO_0000397281" description="Proteasome subunit beta 2">
    <location>
        <begin position="11"/>
        <end position="200"/>
    </location>
</feature>
<feature type="active site" description="Nucleophile" evidence="1">
    <location>
        <position position="11"/>
    </location>
</feature>
<accession>A8M8R5</accession>
<dbReference type="EC" id="3.4.25.1" evidence="1"/>
<dbReference type="EMBL" id="CP000852">
    <property type="protein sequence ID" value="ABW02134.1"/>
    <property type="molecule type" value="Genomic_DNA"/>
</dbReference>
<dbReference type="RefSeq" id="WP_012186353.1">
    <property type="nucleotide sequence ID" value="NC_009954.1"/>
</dbReference>
<dbReference type="SMR" id="A8M8R5"/>
<dbReference type="STRING" id="397948.Cmaq_1307"/>
<dbReference type="MEROPS" id="T01.002"/>
<dbReference type="GeneID" id="5708485"/>
<dbReference type="KEGG" id="cma:Cmaq_1307"/>
<dbReference type="eggNOG" id="arCOG00970">
    <property type="taxonomic scope" value="Archaea"/>
</dbReference>
<dbReference type="HOGENOM" id="CLU_035750_7_2_2"/>
<dbReference type="OrthoDB" id="6330at2157"/>
<dbReference type="Proteomes" id="UP000001137">
    <property type="component" value="Chromosome"/>
</dbReference>
<dbReference type="GO" id="GO:0005737">
    <property type="term" value="C:cytoplasm"/>
    <property type="evidence" value="ECO:0007669"/>
    <property type="project" value="UniProtKB-SubCell"/>
</dbReference>
<dbReference type="GO" id="GO:0019774">
    <property type="term" value="C:proteasome core complex, beta-subunit complex"/>
    <property type="evidence" value="ECO:0007669"/>
    <property type="project" value="UniProtKB-UniRule"/>
</dbReference>
<dbReference type="GO" id="GO:0004298">
    <property type="term" value="F:threonine-type endopeptidase activity"/>
    <property type="evidence" value="ECO:0007669"/>
    <property type="project" value="UniProtKB-UniRule"/>
</dbReference>
<dbReference type="GO" id="GO:0010498">
    <property type="term" value="P:proteasomal protein catabolic process"/>
    <property type="evidence" value="ECO:0007669"/>
    <property type="project" value="UniProtKB-UniRule"/>
</dbReference>
<dbReference type="Gene3D" id="3.60.20.10">
    <property type="entry name" value="Glutamine Phosphoribosylpyrophosphate, subunit 1, domain 1"/>
    <property type="match status" value="1"/>
</dbReference>
<dbReference type="HAMAP" id="MF_02113_A">
    <property type="entry name" value="Proteasome_B_A"/>
    <property type="match status" value="1"/>
</dbReference>
<dbReference type="InterPro" id="IPR029055">
    <property type="entry name" value="Ntn_hydrolases_N"/>
</dbReference>
<dbReference type="InterPro" id="IPR019983">
    <property type="entry name" value="Pept_T1A_Psome_bsu_arc"/>
</dbReference>
<dbReference type="InterPro" id="IPR000243">
    <property type="entry name" value="Pept_T1A_subB"/>
</dbReference>
<dbReference type="InterPro" id="IPR016050">
    <property type="entry name" value="Proteasome_bsu_CS"/>
</dbReference>
<dbReference type="InterPro" id="IPR001353">
    <property type="entry name" value="Proteasome_sua/b"/>
</dbReference>
<dbReference type="InterPro" id="IPR023333">
    <property type="entry name" value="Proteasome_suB-type"/>
</dbReference>
<dbReference type="NCBIfam" id="TIGR03634">
    <property type="entry name" value="arc_protsome_B"/>
    <property type="match status" value="1"/>
</dbReference>
<dbReference type="PANTHER" id="PTHR32194:SF0">
    <property type="entry name" value="ATP-DEPENDENT PROTEASE SUBUNIT HSLV"/>
    <property type="match status" value="1"/>
</dbReference>
<dbReference type="PANTHER" id="PTHR32194">
    <property type="entry name" value="METALLOPROTEASE TLDD"/>
    <property type="match status" value="1"/>
</dbReference>
<dbReference type="Pfam" id="PF00227">
    <property type="entry name" value="Proteasome"/>
    <property type="match status" value="1"/>
</dbReference>
<dbReference type="PRINTS" id="PR00141">
    <property type="entry name" value="PROTEASOME"/>
</dbReference>
<dbReference type="SUPFAM" id="SSF56235">
    <property type="entry name" value="N-terminal nucleophile aminohydrolases (Ntn hydrolases)"/>
    <property type="match status" value="1"/>
</dbReference>
<dbReference type="PROSITE" id="PS00854">
    <property type="entry name" value="PROTEASOME_BETA_1"/>
    <property type="match status" value="1"/>
</dbReference>
<dbReference type="PROSITE" id="PS51476">
    <property type="entry name" value="PROTEASOME_BETA_2"/>
    <property type="match status" value="1"/>
</dbReference>
<sequence>MSDQLELMTGTTVGIKAKDGVVLAAEKRVSYGFYLMSKSGKKVYPITNRIGLASSGILADIQTITKVIRANIANMEIEMKRPVSVRAAAKLLSIMLFQNKYMPYIAETMVGGIDEEGPKLFILDSWGSLIEDDFAALGNGARTAIGLIETGYSSSITVKEAKELAIKAIKEAIARDPTSGDGIDTLVITGNGYLEDSIKL</sequence>
<protein>
    <recommendedName>
        <fullName evidence="1">Proteasome subunit beta 2</fullName>
        <ecNumber evidence="1">3.4.25.1</ecNumber>
    </recommendedName>
    <alternativeName>
        <fullName evidence="1">20S proteasome beta subunit 2</fullName>
    </alternativeName>
    <alternativeName>
        <fullName evidence="1">Proteasome core protein PsmB 2</fullName>
    </alternativeName>
</protein>